<sequence>MMTTSYLAFPQFDPVIFSIGPLALHWYGLMYLVGFVFAMWLAVRRANKPGSGWTKDEVENLLYMGFLGVFVGGRLGYVLFYAFPSFLENPLYLFKVWDGGMSFHGGLMGVICVMLWFAHRTKRHFFQVADFIAPLIPFGLGAGRLGNFINGELWGRVTTDTPWAMLFPGSRSEDMMLAVSNPQWQAIFNQYGMLPRHPSQLYQMMLEGVALFIILNLFIRKSRPMGSVSGLFLIGYGTFRIITEFFRQPDAQLGLFGDLFSMGQILSLPMVIAGILMMVWAYRRQPVQQ</sequence>
<keyword id="KW-0997">Cell inner membrane</keyword>
<keyword id="KW-1003">Cell membrane</keyword>
<keyword id="KW-0472">Membrane</keyword>
<keyword id="KW-0808">Transferase</keyword>
<keyword id="KW-0812">Transmembrane</keyword>
<keyword id="KW-1133">Transmembrane helix</keyword>
<dbReference type="EC" id="2.5.1.145" evidence="1"/>
<dbReference type="EMBL" id="CP001657">
    <property type="protein sequence ID" value="ACT11956.1"/>
    <property type="molecule type" value="Genomic_DNA"/>
</dbReference>
<dbReference type="SMR" id="C6DAE8"/>
<dbReference type="STRING" id="561230.PC1_0906"/>
<dbReference type="KEGG" id="pct:PC1_0906"/>
<dbReference type="eggNOG" id="COG0682">
    <property type="taxonomic scope" value="Bacteria"/>
</dbReference>
<dbReference type="HOGENOM" id="CLU_013386_1_0_6"/>
<dbReference type="UniPathway" id="UPA00664"/>
<dbReference type="Proteomes" id="UP000002736">
    <property type="component" value="Chromosome"/>
</dbReference>
<dbReference type="GO" id="GO:0005886">
    <property type="term" value="C:plasma membrane"/>
    <property type="evidence" value="ECO:0007669"/>
    <property type="project" value="UniProtKB-SubCell"/>
</dbReference>
<dbReference type="GO" id="GO:0008961">
    <property type="term" value="F:phosphatidylglycerol-prolipoprotein diacylglyceryl transferase activity"/>
    <property type="evidence" value="ECO:0007669"/>
    <property type="project" value="UniProtKB-UniRule"/>
</dbReference>
<dbReference type="GO" id="GO:0042158">
    <property type="term" value="P:lipoprotein biosynthetic process"/>
    <property type="evidence" value="ECO:0007669"/>
    <property type="project" value="UniProtKB-UniRule"/>
</dbReference>
<dbReference type="HAMAP" id="MF_01147">
    <property type="entry name" value="Lgt"/>
    <property type="match status" value="1"/>
</dbReference>
<dbReference type="InterPro" id="IPR001640">
    <property type="entry name" value="Lgt"/>
</dbReference>
<dbReference type="NCBIfam" id="TIGR00544">
    <property type="entry name" value="lgt"/>
    <property type="match status" value="1"/>
</dbReference>
<dbReference type="PANTHER" id="PTHR30589:SF0">
    <property type="entry name" value="PHOSPHATIDYLGLYCEROL--PROLIPOPROTEIN DIACYLGLYCERYL TRANSFERASE"/>
    <property type="match status" value="1"/>
</dbReference>
<dbReference type="PANTHER" id="PTHR30589">
    <property type="entry name" value="PROLIPOPROTEIN DIACYLGLYCERYL TRANSFERASE"/>
    <property type="match status" value="1"/>
</dbReference>
<dbReference type="Pfam" id="PF01790">
    <property type="entry name" value="LGT"/>
    <property type="match status" value="1"/>
</dbReference>
<dbReference type="PROSITE" id="PS01311">
    <property type="entry name" value="LGT"/>
    <property type="match status" value="1"/>
</dbReference>
<organism>
    <name type="scientific">Pectobacterium carotovorum subsp. carotovorum (strain PC1)</name>
    <dbReference type="NCBI Taxonomy" id="561230"/>
    <lineage>
        <taxon>Bacteria</taxon>
        <taxon>Pseudomonadati</taxon>
        <taxon>Pseudomonadota</taxon>
        <taxon>Gammaproteobacteria</taxon>
        <taxon>Enterobacterales</taxon>
        <taxon>Pectobacteriaceae</taxon>
        <taxon>Pectobacterium</taxon>
    </lineage>
</organism>
<name>LGT_PECCP</name>
<proteinExistence type="inferred from homology"/>
<evidence type="ECO:0000255" key="1">
    <source>
        <dbReference type="HAMAP-Rule" id="MF_01147"/>
    </source>
</evidence>
<gene>
    <name evidence="1" type="primary">lgt</name>
    <name type="ordered locus">PC1_0906</name>
</gene>
<feature type="chain" id="PRO_1000213655" description="Phosphatidylglycerol--prolipoprotein diacylglyceryl transferase">
    <location>
        <begin position="1"/>
        <end position="289"/>
    </location>
</feature>
<feature type="transmembrane region" description="Helical" evidence="1">
    <location>
        <begin position="23"/>
        <end position="43"/>
    </location>
</feature>
<feature type="transmembrane region" description="Helical" evidence="1">
    <location>
        <begin position="61"/>
        <end position="81"/>
    </location>
</feature>
<feature type="transmembrane region" description="Helical" evidence="1">
    <location>
        <begin position="99"/>
        <end position="119"/>
    </location>
</feature>
<feature type="transmembrane region" description="Helical" evidence="1">
    <location>
        <begin position="125"/>
        <end position="145"/>
    </location>
</feature>
<feature type="transmembrane region" description="Helical" evidence="1">
    <location>
        <begin position="199"/>
        <end position="219"/>
    </location>
</feature>
<feature type="transmembrane region" description="Helical" evidence="1">
    <location>
        <begin position="226"/>
        <end position="246"/>
    </location>
</feature>
<feature type="transmembrane region" description="Helical" evidence="1">
    <location>
        <begin position="259"/>
        <end position="279"/>
    </location>
</feature>
<feature type="binding site" evidence="1">
    <location>
        <position position="144"/>
    </location>
    <ligand>
        <name>a 1,2-diacyl-sn-glycero-3-phospho-(1'-sn-glycerol)</name>
        <dbReference type="ChEBI" id="CHEBI:64716"/>
    </ligand>
</feature>
<reference key="1">
    <citation type="submission" date="2009-07" db="EMBL/GenBank/DDBJ databases">
        <title>Complete sequence of Pectobacterium carotovorum subsp. carotovorum PC1.</title>
        <authorList>
            <consortium name="US DOE Joint Genome Institute"/>
            <person name="Lucas S."/>
            <person name="Copeland A."/>
            <person name="Lapidus A."/>
            <person name="Glavina del Rio T."/>
            <person name="Tice H."/>
            <person name="Bruce D."/>
            <person name="Goodwin L."/>
            <person name="Pitluck S."/>
            <person name="Munk A.C."/>
            <person name="Brettin T."/>
            <person name="Detter J.C."/>
            <person name="Han C."/>
            <person name="Tapia R."/>
            <person name="Larimer F."/>
            <person name="Land M."/>
            <person name="Hauser L."/>
            <person name="Kyrpides N."/>
            <person name="Mikhailova N."/>
            <person name="Balakrishnan V."/>
            <person name="Glasner J."/>
            <person name="Perna N.T."/>
        </authorList>
    </citation>
    <scope>NUCLEOTIDE SEQUENCE [LARGE SCALE GENOMIC DNA]</scope>
    <source>
        <strain>PC1</strain>
    </source>
</reference>
<protein>
    <recommendedName>
        <fullName evidence="1">Phosphatidylglycerol--prolipoprotein diacylglyceryl transferase</fullName>
        <ecNumber evidence="1">2.5.1.145</ecNumber>
    </recommendedName>
</protein>
<comment type="function">
    <text evidence="1">Catalyzes the transfer of the diacylglyceryl group from phosphatidylglycerol to the sulfhydryl group of the N-terminal cysteine of a prolipoprotein, the first step in the formation of mature lipoproteins.</text>
</comment>
<comment type="catalytic activity">
    <reaction evidence="1">
        <text>L-cysteinyl-[prolipoprotein] + a 1,2-diacyl-sn-glycero-3-phospho-(1'-sn-glycerol) = an S-1,2-diacyl-sn-glyceryl-L-cysteinyl-[prolipoprotein] + sn-glycerol 1-phosphate + H(+)</text>
        <dbReference type="Rhea" id="RHEA:56712"/>
        <dbReference type="Rhea" id="RHEA-COMP:14679"/>
        <dbReference type="Rhea" id="RHEA-COMP:14680"/>
        <dbReference type="ChEBI" id="CHEBI:15378"/>
        <dbReference type="ChEBI" id="CHEBI:29950"/>
        <dbReference type="ChEBI" id="CHEBI:57685"/>
        <dbReference type="ChEBI" id="CHEBI:64716"/>
        <dbReference type="ChEBI" id="CHEBI:140658"/>
        <dbReference type="EC" id="2.5.1.145"/>
    </reaction>
</comment>
<comment type="pathway">
    <text evidence="1">Protein modification; lipoprotein biosynthesis (diacylglyceryl transfer).</text>
</comment>
<comment type="subcellular location">
    <subcellularLocation>
        <location evidence="1">Cell inner membrane</location>
        <topology evidence="1">Multi-pass membrane protein</topology>
    </subcellularLocation>
</comment>
<comment type="similarity">
    <text evidence="1">Belongs to the Lgt family.</text>
</comment>
<accession>C6DAE8</accession>